<organismHost>
    <name type="scientific">Salmonella</name>
    <dbReference type="NCBI Taxonomy" id="590"/>
</organismHost>
<sequence>MRKFDLSLRSSRSSYFATFRHQLTILSKTDALDEEKWLNMLGTFVKDWFRYESHFVHGRDSLVDILKERGLLSESDAVQPLIGKKS</sequence>
<reference key="1">
    <citation type="journal article" date="1985" name="Gene">
        <title>Nucleotide sequence and genome organization of bacteriophage S13 DNA.</title>
        <authorList>
            <person name="Lau P.C.K."/>
            <person name="Spencer J.H."/>
        </authorList>
    </citation>
    <scope>NUCLEOTIDE SEQUENCE [GENOMIC DNA]</scope>
</reference>
<dbReference type="EMBL" id="M14428">
    <property type="protein sequence ID" value="AAA32586.1"/>
    <property type="molecule type" value="Genomic_DNA"/>
</dbReference>
<dbReference type="PIR" id="JS0453">
    <property type="entry name" value="JS0453"/>
</dbReference>
<dbReference type="SMR" id="P69173"/>
<dbReference type="Proteomes" id="UP000002129">
    <property type="component" value="Segment"/>
</dbReference>
<dbReference type="GO" id="GO:0019073">
    <property type="term" value="P:viral DNA genome packaging"/>
    <property type="evidence" value="ECO:0007669"/>
    <property type="project" value="InterPro"/>
</dbReference>
<dbReference type="InterPro" id="IPR016407">
    <property type="entry name" value="C-protein"/>
</dbReference>
<dbReference type="Pfam" id="PF12025">
    <property type="entry name" value="Phage_C"/>
    <property type="match status" value="1"/>
</dbReference>
<dbReference type="PIRSF" id="PIRSF004155">
    <property type="entry name" value="Phage_C"/>
    <property type="match status" value="1"/>
</dbReference>
<accession>P69173</accession>
<accession>P03635</accession>
<keyword id="KW-1185">Reference proteome</keyword>
<protein>
    <recommendedName>
        <fullName>C protein</fullName>
    </recommendedName>
</protein>
<name>VGC_BPS13</name>
<organism>
    <name type="scientific">Enterobacteria phage S13</name>
    <name type="common">Bacteriophage S13</name>
    <dbReference type="NCBI Taxonomy" id="10844"/>
    <lineage>
        <taxon>Viruses</taxon>
        <taxon>Monodnaviria</taxon>
        <taxon>Sangervirae</taxon>
        <taxon>Phixviricota</taxon>
        <taxon>Malgrandaviricetes</taxon>
        <taxon>Petitvirales</taxon>
        <taxon>Microviridae</taxon>
        <taxon>Bullavirinae</taxon>
        <taxon>Sinsheimervirus</taxon>
        <taxon>Escherichia phage phiX174</taxon>
        <taxon>Escherichia phage phiX174</taxon>
    </lineage>
</organism>
<feature type="chain" id="PRO_0000164876" description="C protein">
    <location>
        <begin position="1"/>
        <end position="86"/>
    </location>
</feature>
<proteinExistence type="predicted"/>
<comment type="function">
    <text>C protein is one of the proteins involved in the production and packaging of viral single-stranded DNA.</text>
</comment>
<gene>
    <name type="primary">C</name>
</gene>